<dbReference type="EC" id="1.1.1.37" evidence="1"/>
<dbReference type="EMBL" id="CP001191">
    <property type="protein sequence ID" value="ACI56948.1"/>
    <property type="molecule type" value="Genomic_DNA"/>
</dbReference>
<dbReference type="RefSeq" id="WP_003543522.1">
    <property type="nucleotide sequence ID" value="NC_011369.1"/>
</dbReference>
<dbReference type="SMR" id="B5ZSS0"/>
<dbReference type="STRING" id="395492.Rleg2_3685"/>
<dbReference type="GeneID" id="84672083"/>
<dbReference type="KEGG" id="rlt:Rleg2_3685"/>
<dbReference type="eggNOG" id="COG0039">
    <property type="taxonomic scope" value="Bacteria"/>
</dbReference>
<dbReference type="HOGENOM" id="CLU_045401_2_1_5"/>
<dbReference type="Proteomes" id="UP000008330">
    <property type="component" value="Chromosome"/>
</dbReference>
<dbReference type="GO" id="GO:0004459">
    <property type="term" value="F:L-lactate dehydrogenase activity"/>
    <property type="evidence" value="ECO:0007669"/>
    <property type="project" value="TreeGrafter"/>
</dbReference>
<dbReference type="GO" id="GO:0030060">
    <property type="term" value="F:L-malate dehydrogenase (NAD+) activity"/>
    <property type="evidence" value="ECO:0007669"/>
    <property type="project" value="UniProtKB-UniRule"/>
</dbReference>
<dbReference type="GO" id="GO:0006089">
    <property type="term" value="P:lactate metabolic process"/>
    <property type="evidence" value="ECO:0007669"/>
    <property type="project" value="TreeGrafter"/>
</dbReference>
<dbReference type="GO" id="GO:0006099">
    <property type="term" value="P:tricarboxylic acid cycle"/>
    <property type="evidence" value="ECO:0007669"/>
    <property type="project" value="UniProtKB-UniRule"/>
</dbReference>
<dbReference type="CDD" id="cd01339">
    <property type="entry name" value="LDH-like_MDH"/>
    <property type="match status" value="1"/>
</dbReference>
<dbReference type="FunFam" id="3.40.50.720:FF:000018">
    <property type="entry name" value="Malate dehydrogenase"/>
    <property type="match status" value="1"/>
</dbReference>
<dbReference type="FunFam" id="3.90.110.10:FF:000004">
    <property type="entry name" value="Malate dehydrogenase"/>
    <property type="match status" value="1"/>
</dbReference>
<dbReference type="Gene3D" id="3.90.110.10">
    <property type="entry name" value="Lactate dehydrogenase/glycoside hydrolase, family 4, C-terminal"/>
    <property type="match status" value="1"/>
</dbReference>
<dbReference type="Gene3D" id="3.40.50.720">
    <property type="entry name" value="NAD(P)-binding Rossmann-like Domain"/>
    <property type="match status" value="1"/>
</dbReference>
<dbReference type="HAMAP" id="MF_00487">
    <property type="entry name" value="Malate_dehydrog_3"/>
    <property type="match status" value="1"/>
</dbReference>
<dbReference type="InterPro" id="IPR001557">
    <property type="entry name" value="L-lactate/malate_DH"/>
</dbReference>
<dbReference type="InterPro" id="IPR022383">
    <property type="entry name" value="Lactate/malate_DH_C"/>
</dbReference>
<dbReference type="InterPro" id="IPR001236">
    <property type="entry name" value="Lactate/malate_DH_N"/>
</dbReference>
<dbReference type="InterPro" id="IPR015955">
    <property type="entry name" value="Lactate_DH/Glyco_Ohase_4_C"/>
</dbReference>
<dbReference type="InterPro" id="IPR011275">
    <property type="entry name" value="Malate_DH_type3"/>
</dbReference>
<dbReference type="InterPro" id="IPR036291">
    <property type="entry name" value="NAD(P)-bd_dom_sf"/>
</dbReference>
<dbReference type="NCBIfam" id="TIGR01763">
    <property type="entry name" value="MalateDH_bact"/>
    <property type="match status" value="1"/>
</dbReference>
<dbReference type="NCBIfam" id="NF004863">
    <property type="entry name" value="PRK06223.1"/>
    <property type="match status" value="1"/>
</dbReference>
<dbReference type="PANTHER" id="PTHR43128">
    <property type="entry name" value="L-2-HYDROXYCARBOXYLATE DEHYDROGENASE (NAD(P)(+))"/>
    <property type="match status" value="1"/>
</dbReference>
<dbReference type="PANTHER" id="PTHR43128:SF16">
    <property type="entry name" value="L-LACTATE DEHYDROGENASE"/>
    <property type="match status" value="1"/>
</dbReference>
<dbReference type="Pfam" id="PF02866">
    <property type="entry name" value="Ldh_1_C"/>
    <property type="match status" value="1"/>
</dbReference>
<dbReference type="Pfam" id="PF00056">
    <property type="entry name" value="Ldh_1_N"/>
    <property type="match status" value="1"/>
</dbReference>
<dbReference type="PIRSF" id="PIRSF000102">
    <property type="entry name" value="Lac_mal_DH"/>
    <property type="match status" value="1"/>
</dbReference>
<dbReference type="PRINTS" id="PR00086">
    <property type="entry name" value="LLDHDRGNASE"/>
</dbReference>
<dbReference type="SUPFAM" id="SSF56327">
    <property type="entry name" value="LDH C-terminal domain-like"/>
    <property type="match status" value="1"/>
</dbReference>
<dbReference type="SUPFAM" id="SSF51735">
    <property type="entry name" value="NAD(P)-binding Rossmann-fold domains"/>
    <property type="match status" value="1"/>
</dbReference>
<organism>
    <name type="scientific">Rhizobium leguminosarum bv. trifolii (strain WSM2304)</name>
    <dbReference type="NCBI Taxonomy" id="395492"/>
    <lineage>
        <taxon>Bacteria</taxon>
        <taxon>Pseudomonadati</taxon>
        <taxon>Pseudomonadota</taxon>
        <taxon>Alphaproteobacteria</taxon>
        <taxon>Hyphomicrobiales</taxon>
        <taxon>Rhizobiaceae</taxon>
        <taxon>Rhizobium/Agrobacterium group</taxon>
        <taxon>Rhizobium</taxon>
    </lineage>
</organism>
<proteinExistence type="inferred from homology"/>
<gene>
    <name evidence="1" type="primary">mdh</name>
    <name type="ordered locus">Rleg2_3685</name>
</gene>
<keyword id="KW-0520">NAD</keyword>
<keyword id="KW-0560">Oxidoreductase</keyword>
<keyword id="KW-1185">Reference proteome</keyword>
<keyword id="KW-0816">Tricarboxylic acid cycle</keyword>
<evidence type="ECO:0000255" key="1">
    <source>
        <dbReference type="HAMAP-Rule" id="MF_00487"/>
    </source>
</evidence>
<reference key="1">
    <citation type="journal article" date="2010" name="Stand. Genomic Sci.">
        <title>Complete genome sequence of Rhizobium leguminosarum bv trifolii strain WSM2304, an effective microsymbiont of the South American clover Trifolium polymorphum.</title>
        <authorList>
            <person name="Reeve W."/>
            <person name="O'Hara G."/>
            <person name="Chain P."/>
            <person name="Ardley J."/>
            <person name="Brau L."/>
            <person name="Nandesena K."/>
            <person name="Tiwari R."/>
            <person name="Malfatti S."/>
            <person name="Kiss H."/>
            <person name="Lapidus A."/>
            <person name="Copeland A."/>
            <person name="Nolan M."/>
            <person name="Land M."/>
            <person name="Ivanova N."/>
            <person name="Mavromatis K."/>
            <person name="Markowitz V."/>
            <person name="Kyrpides N."/>
            <person name="Melino V."/>
            <person name="Denton M."/>
            <person name="Yates R."/>
            <person name="Howieson J."/>
        </authorList>
    </citation>
    <scope>NUCLEOTIDE SEQUENCE [LARGE SCALE GENOMIC DNA]</scope>
    <source>
        <strain>WSM2304</strain>
    </source>
</reference>
<comment type="function">
    <text evidence="1">Catalyzes the reversible oxidation of malate to oxaloacetate.</text>
</comment>
<comment type="catalytic activity">
    <reaction evidence="1">
        <text>(S)-malate + NAD(+) = oxaloacetate + NADH + H(+)</text>
        <dbReference type="Rhea" id="RHEA:21432"/>
        <dbReference type="ChEBI" id="CHEBI:15378"/>
        <dbReference type="ChEBI" id="CHEBI:15589"/>
        <dbReference type="ChEBI" id="CHEBI:16452"/>
        <dbReference type="ChEBI" id="CHEBI:57540"/>
        <dbReference type="ChEBI" id="CHEBI:57945"/>
        <dbReference type="EC" id="1.1.1.37"/>
    </reaction>
</comment>
<comment type="similarity">
    <text evidence="1">Belongs to the LDH/MDH superfamily. MDH type 3 family.</text>
</comment>
<feature type="chain" id="PRO_1000126147" description="Malate dehydrogenase">
    <location>
        <begin position="1"/>
        <end position="320"/>
    </location>
</feature>
<feature type="active site" description="Proton acceptor" evidence="1">
    <location>
        <position position="176"/>
    </location>
</feature>
<feature type="binding site" evidence="1">
    <location>
        <begin position="10"/>
        <end position="15"/>
    </location>
    <ligand>
        <name>NAD(+)</name>
        <dbReference type="ChEBI" id="CHEBI:57540"/>
    </ligand>
</feature>
<feature type="binding site" evidence="1">
    <location>
        <position position="34"/>
    </location>
    <ligand>
        <name>NAD(+)</name>
        <dbReference type="ChEBI" id="CHEBI:57540"/>
    </ligand>
</feature>
<feature type="binding site" evidence="1">
    <location>
        <position position="83"/>
    </location>
    <ligand>
        <name>substrate</name>
    </ligand>
</feature>
<feature type="binding site" evidence="1">
    <location>
        <position position="89"/>
    </location>
    <ligand>
        <name>substrate</name>
    </ligand>
</feature>
<feature type="binding site" evidence="1">
    <location>
        <position position="96"/>
    </location>
    <ligand>
        <name>NAD(+)</name>
        <dbReference type="ChEBI" id="CHEBI:57540"/>
    </ligand>
</feature>
<feature type="binding site" evidence="1">
    <location>
        <begin position="119"/>
        <end position="121"/>
    </location>
    <ligand>
        <name>NAD(+)</name>
        <dbReference type="ChEBI" id="CHEBI:57540"/>
    </ligand>
</feature>
<feature type="binding site" evidence="1">
    <location>
        <position position="121"/>
    </location>
    <ligand>
        <name>substrate</name>
    </ligand>
</feature>
<feature type="binding site" evidence="1">
    <location>
        <position position="152"/>
    </location>
    <ligand>
        <name>substrate</name>
    </ligand>
</feature>
<protein>
    <recommendedName>
        <fullName evidence="1">Malate dehydrogenase</fullName>
        <ecNumber evidence="1">1.1.1.37</ecNumber>
    </recommendedName>
</protein>
<sequence length="320" mass="33590">MARNKIALIGSGMIGGTLAHLAGLKELGDIVLFDIADGIPQGKGLDISQSSPVEGFDVNLTGASDYSAIEGADVCIVTAGVARKPGMSRDDLLGINLKVMEQVGAGIKKYAPNAFVICITNPLDAMVWALQKFSGLPANKVVGMAGVLDSSRFRLFLAKEFNVSVQDVTAFVLGGHGDTMVPLARYSTVGGIPLTDLVTMGWVTKERLEEIIQRTRDGGAEIVGLLKTGSAYYAPAASAIEMAESYLKDKKRVLPCAAHLSGQYGVKDMYVGVPTVIGAGGVERIIEIDLNKTEKEAFDKSVGAVAGLCEACINIAPALK</sequence>
<name>MDH_RHILW</name>
<accession>B5ZSS0</accession>